<organism>
    <name type="scientific">Chlorobium phaeobacteroides (strain BS1)</name>
    <dbReference type="NCBI Taxonomy" id="331678"/>
    <lineage>
        <taxon>Bacteria</taxon>
        <taxon>Pseudomonadati</taxon>
        <taxon>Chlorobiota</taxon>
        <taxon>Chlorobiia</taxon>
        <taxon>Chlorobiales</taxon>
        <taxon>Chlorobiaceae</taxon>
        <taxon>Chlorobium/Pelodictyon group</taxon>
        <taxon>Chlorobium</taxon>
    </lineage>
</organism>
<protein>
    <recommendedName>
        <fullName evidence="1">Small ribosomal subunit protein uS17</fullName>
    </recommendedName>
    <alternativeName>
        <fullName evidence="2">30S ribosomal protein S17</fullName>
    </alternativeName>
</protein>
<reference key="1">
    <citation type="submission" date="2008-06" db="EMBL/GenBank/DDBJ databases">
        <title>Complete sequence of Chlorobium phaeobacteroides BS1.</title>
        <authorList>
            <consortium name="US DOE Joint Genome Institute"/>
            <person name="Lucas S."/>
            <person name="Copeland A."/>
            <person name="Lapidus A."/>
            <person name="Glavina del Rio T."/>
            <person name="Dalin E."/>
            <person name="Tice H."/>
            <person name="Bruce D."/>
            <person name="Goodwin L."/>
            <person name="Pitluck S."/>
            <person name="Schmutz J."/>
            <person name="Larimer F."/>
            <person name="Land M."/>
            <person name="Hauser L."/>
            <person name="Kyrpides N."/>
            <person name="Ovchinnikova G."/>
            <person name="Li T."/>
            <person name="Liu Z."/>
            <person name="Zhao F."/>
            <person name="Overmann J."/>
            <person name="Bryant D.A."/>
            <person name="Richardson P."/>
        </authorList>
    </citation>
    <scope>NUCLEOTIDE SEQUENCE [LARGE SCALE GENOMIC DNA]</scope>
    <source>
        <strain>BS1</strain>
    </source>
</reference>
<comment type="function">
    <text evidence="1">One of the primary rRNA binding proteins, it binds specifically to the 5'-end of 16S ribosomal RNA.</text>
</comment>
<comment type="subunit">
    <text evidence="1">Part of the 30S ribosomal subunit.</text>
</comment>
<comment type="similarity">
    <text evidence="1">Belongs to the universal ribosomal protein uS17 family.</text>
</comment>
<dbReference type="EMBL" id="CP001101">
    <property type="protein sequence ID" value="ACE05191.1"/>
    <property type="molecule type" value="Genomic_DNA"/>
</dbReference>
<dbReference type="SMR" id="B3EP52"/>
<dbReference type="STRING" id="331678.Cphamn1_2287"/>
<dbReference type="KEGG" id="cpb:Cphamn1_2287"/>
<dbReference type="eggNOG" id="COG0186">
    <property type="taxonomic scope" value="Bacteria"/>
</dbReference>
<dbReference type="HOGENOM" id="CLU_073626_1_1_10"/>
<dbReference type="OrthoDB" id="9811714at2"/>
<dbReference type="GO" id="GO:0022627">
    <property type="term" value="C:cytosolic small ribosomal subunit"/>
    <property type="evidence" value="ECO:0007669"/>
    <property type="project" value="TreeGrafter"/>
</dbReference>
<dbReference type="GO" id="GO:0019843">
    <property type="term" value="F:rRNA binding"/>
    <property type="evidence" value="ECO:0007669"/>
    <property type="project" value="UniProtKB-UniRule"/>
</dbReference>
<dbReference type="GO" id="GO:0003735">
    <property type="term" value="F:structural constituent of ribosome"/>
    <property type="evidence" value="ECO:0007669"/>
    <property type="project" value="InterPro"/>
</dbReference>
<dbReference type="GO" id="GO:0006412">
    <property type="term" value="P:translation"/>
    <property type="evidence" value="ECO:0007669"/>
    <property type="project" value="UniProtKB-UniRule"/>
</dbReference>
<dbReference type="CDD" id="cd00364">
    <property type="entry name" value="Ribosomal_uS17"/>
    <property type="match status" value="1"/>
</dbReference>
<dbReference type="Gene3D" id="2.40.50.140">
    <property type="entry name" value="Nucleic acid-binding proteins"/>
    <property type="match status" value="1"/>
</dbReference>
<dbReference type="HAMAP" id="MF_01345_B">
    <property type="entry name" value="Ribosomal_uS17_B"/>
    <property type="match status" value="1"/>
</dbReference>
<dbReference type="InterPro" id="IPR012340">
    <property type="entry name" value="NA-bd_OB-fold"/>
</dbReference>
<dbReference type="InterPro" id="IPR000266">
    <property type="entry name" value="Ribosomal_uS17"/>
</dbReference>
<dbReference type="InterPro" id="IPR019984">
    <property type="entry name" value="Ribosomal_uS17_bact/chlr"/>
</dbReference>
<dbReference type="InterPro" id="IPR019979">
    <property type="entry name" value="Ribosomal_uS17_CS"/>
</dbReference>
<dbReference type="NCBIfam" id="NF004123">
    <property type="entry name" value="PRK05610.1"/>
    <property type="match status" value="1"/>
</dbReference>
<dbReference type="NCBIfam" id="TIGR03635">
    <property type="entry name" value="uS17_bact"/>
    <property type="match status" value="1"/>
</dbReference>
<dbReference type="PANTHER" id="PTHR10744">
    <property type="entry name" value="40S RIBOSOMAL PROTEIN S11 FAMILY MEMBER"/>
    <property type="match status" value="1"/>
</dbReference>
<dbReference type="PANTHER" id="PTHR10744:SF1">
    <property type="entry name" value="SMALL RIBOSOMAL SUBUNIT PROTEIN US17M"/>
    <property type="match status" value="1"/>
</dbReference>
<dbReference type="Pfam" id="PF00366">
    <property type="entry name" value="Ribosomal_S17"/>
    <property type="match status" value="1"/>
</dbReference>
<dbReference type="PRINTS" id="PR00973">
    <property type="entry name" value="RIBOSOMALS17"/>
</dbReference>
<dbReference type="SUPFAM" id="SSF50249">
    <property type="entry name" value="Nucleic acid-binding proteins"/>
    <property type="match status" value="1"/>
</dbReference>
<dbReference type="PROSITE" id="PS00056">
    <property type="entry name" value="RIBOSOMAL_S17"/>
    <property type="match status" value="1"/>
</dbReference>
<sequence length="89" mass="10311">MVKSAEVRRRKKSWVGKVVSDKMDKAIVIAIERRVQHPVYKKYFKKTTRLMAHDENNDAGIGDIVKVTECRPLSKRKSCRLVEVVEKAK</sequence>
<gene>
    <name evidence="1" type="primary">rpsQ</name>
    <name type="ordered locus">Cphamn1_2287</name>
</gene>
<name>RS17_CHLPB</name>
<accession>B3EP52</accession>
<feature type="chain" id="PRO_1000143237" description="Small ribosomal subunit protein uS17">
    <location>
        <begin position="1"/>
        <end position="89"/>
    </location>
</feature>
<proteinExistence type="inferred from homology"/>
<keyword id="KW-0687">Ribonucleoprotein</keyword>
<keyword id="KW-0689">Ribosomal protein</keyword>
<keyword id="KW-0694">RNA-binding</keyword>
<keyword id="KW-0699">rRNA-binding</keyword>
<evidence type="ECO:0000255" key="1">
    <source>
        <dbReference type="HAMAP-Rule" id="MF_01345"/>
    </source>
</evidence>
<evidence type="ECO:0000305" key="2"/>